<dbReference type="EC" id="1.3.2.-" evidence="6"/>
<dbReference type="EMBL" id="CP000961">
    <property type="protein sequence ID" value="ACA84576.1"/>
    <property type="molecule type" value="Genomic_DNA"/>
</dbReference>
<dbReference type="RefSeq" id="WP_012322925.1">
    <property type="nucleotide sequence ID" value="NC_010506.1"/>
</dbReference>
<dbReference type="SMR" id="B1KN79"/>
<dbReference type="STRING" id="392500.Swoo_0275"/>
<dbReference type="KEGG" id="swd:Swoo_0275"/>
<dbReference type="eggNOG" id="COG1053">
    <property type="taxonomic scope" value="Bacteria"/>
</dbReference>
<dbReference type="HOGENOM" id="CLU_011398_4_5_6"/>
<dbReference type="Proteomes" id="UP000002168">
    <property type="component" value="Chromosome"/>
</dbReference>
<dbReference type="GO" id="GO:0042597">
    <property type="term" value="C:periplasmic space"/>
    <property type="evidence" value="ECO:0007669"/>
    <property type="project" value="UniProtKB-SubCell"/>
</dbReference>
<dbReference type="GO" id="GO:0010181">
    <property type="term" value="F:FMN binding"/>
    <property type="evidence" value="ECO:0007669"/>
    <property type="project" value="InterPro"/>
</dbReference>
<dbReference type="GO" id="GO:0016491">
    <property type="term" value="F:oxidoreductase activity"/>
    <property type="evidence" value="ECO:0007669"/>
    <property type="project" value="UniProtKB-KW"/>
</dbReference>
<dbReference type="Gene3D" id="3.50.50.60">
    <property type="entry name" value="FAD/NAD(P)-binding domain"/>
    <property type="match status" value="1"/>
</dbReference>
<dbReference type="Gene3D" id="3.90.700.10">
    <property type="entry name" value="Succinate dehydrogenase/fumarate reductase flavoprotein, catalytic domain"/>
    <property type="match status" value="1"/>
</dbReference>
<dbReference type="InterPro" id="IPR003953">
    <property type="entry name" value="FAD-dep_OxRdtase_2_FAD-bd"/>
</dbReference>
<dbReference type="InterPro" id="IPR050315">
    <property type="entry name" value="FAD-oxidoreductase_2"/>
</dbReference>
<dbReference type="InterPro" id="IPR036188">
    <property type="entry name" value="FAD/NAD-bd_sf"/>
</dbReference>
<dbReference type="InterPro" id="IPR010960">
    <property type="entry name" value="Flavocytochrome_c"/>
</dbReference>
<dbReference type="InterPro" id="IPR027477">
    <property type="entry name" value="Succ_DH/fumarate_Rdtase_cat_sf"/>
</dbReference>
<dbReference type="InterPro" id="IPR006311">
    <property type="entry name" value="TAT_signal"/>
</dbReference>
<dbReference type="NCBIfam" id="TIGR01813">
    <property type="entry name" value="flavo_cyto_c"/>
    <property type="match status" value="1"/>
</dbReference>
<dbReference type="PANTHER" id="PTHR43400:SF7">
    <property type="entry name" value="FAD-DEPENDENT OXIDOREDUCTASE 2 FAD BINDING DOMAIN-CONTAINING PROTEIN"/>
    <property type="match status" value="1"/>
</dbReference>
<dbReference type="PANTHER" id="PTHR43400">
    <property type="entry name" value="FUMARATE REDUCTASE"/>
    <property type="match status" value="1"/>
</dbReference>
<dbReference type="Pfam" id="PF00890">
    <property type="entry name" value="FAD_binding_2"/>
    <property type="match status" value="1"/>
</dbReference>
<dbReference type="PRINTS" id="PR00368">
    <property type="entry name" value="FADPNR"/>
</dbReference>
<dbReference type="SUPFAM" id="SSF51905">
    <property type="entry name" value="FAD/NAD(P)-binding domain"/>
    <property type="match status" value="1"/>
</dbReference>
<dbReference type="SUPFAM" id="SSF56425">
    <property type="entry name" value="Succinate dehydrogenase/fumarate reductase flavoprotein, catalytic domain"/>
    <property type="match status" value="1"/>
</dbReference>
<dbReference type="PROSITE" id="PS51318">
    <property type="entry name" value="TAT"/>
    <property type="match status" value="1"/>
</dbReference>
<gene>
    <name evidence="4" type="primary">ardA</name>
    <name evidence="7" type="ordered locus">Swoo_0275</name>
</gene>
<keyword id="KW-0274">FAD</keyword>
<keyword id="KW-0285">Flavoprotein</keyword>
<keyword id="KW-0560">Oxidoreductase</keyword>
<keyword id="KW-0574">Periplasm</keyword>
<keyword id="KW-1185">Reference proteome</keyword>
<keyword id="KW-0732">Signal</keyword>
<evidence type="ECO:0000250" key="1">
    <source>
        <dbReference type="UniProtKB" id="P0C278"/>
    </source>
</evidence>
<evidence type="ECO:0000255" key="2">
    <source>
        <dbReference type="PROSITE-ProRule" id="PRU00648"/>
    </source>
</evidence>
<evidence type="ECO:0000269" key="3">
    <source>
    </source>
</evidence>
<evidence type="ECO:0000303" key="4">
    <source>
    </source>
</evidence>
<evidence type="ECO:0000305" key="5"/>
<evidence type="ECO:0000305" key="6">
    <source>
    </source>
</evidence>
<evidence type="ECO:0000312" key="7">
    <source>
        <dbReference type="EMBL" id="ACA84576.1"/>
    </source>
</evidence>
<feature type="signal peptide" description="Tat-type signal" evidence="2">
    <location>
        <begin position="1"/>
        <end position="30"/>
    </location>
</feature>
<feature type="chain" id="PRO_5022271636" description="Acrylate reductase flavoprotein subunit">
    <location>
        <begin position="31"/>
        <end position="506"/>
    </location>
</feature>
<feature type="active site" description="Proton donor" evidence="1">
    <location>
        <position position="333"/>
    </location>
</feature>
<feature type="binding site" evidence="1">
    <location>
        <position position="54"/>
    </location>
    <ligand>
        <name>FAD</name>
        <dbReference type="ChEBI" id="CHEBI:57692"/>
    </ligand>
</feature>
<feature type="binding site" evidence="1">
    <location>
        <position position="74"/>
    </location>
    <ligand>
        <name>FAD</name>
        <dbReference type="ChEBI" id="CHEBI:57692"/>
    </ligand>
</feature>
<feature type="binding site" evidence="1">
    <location>
        <position position="82"/>
    </location>
    <ligand>
        <name>FAD</name>
        <dbReference type="ChEBI" id="CHEBI:57692"/>
    </ligand>
</feature>
<feature type="binding site" evidence="1">
    <location>
        <position position="87"/>
    </location>
    <ligand>
        <name>FAD</name>
        <dbReference type="ChEBI" id="CHEBI:57692"/>
    </ligand>
</feature>
<feature type="binding site" evidence="1">
    <location>
        <position position="88"/>
    </location>
    <ligand>
        <name>FAD</name>
        <dbReference type="ChEBI" id="CHEBI:57692"/>
    </ligand>
</feature>
<feature type="binding site" evidence="1">
    <location>
        <position position="473"/>
    </location>
    <ligand>
        <name>FAD</name>
        <dbReference type="ChEBI" id="CHEBI:57692"/>
    </ligand>
</feature>
<feature type="binding site" evidence="1">
    <location>
        <position position="489"/>
    </location>
    <ligand>
        <name>FAD</name>
        <dbReference type="ChEBI" id="CHEBI:57692"/>
    </ligand>
</feature>
<organism>
    <name type="scientific">Shewanella woodyi (strain ATCC 51908 / MS32)</name>
    <dbReference type="NCBI Taxonomy" id="392500"/>
    <lineage>
        <taxon>Bacteria</taxon>
        <taxon>Pseudomonadati</taxon>
        <taxon>Pseudomonadota</taxon>
        <taxon>Gammaproteobacteria</taxon>
        <taxon>Alteromonadales</taxon>
        <taxon>Shewanellaceae</taxon>
        <taxon>Shewanella</taxon>
    </lineage>
</organism>
<sequence length="506" mass="54561">MSNKDLLGRRNFIKGMGAAAGVAMAAPALAVSENANGVKWDKEVEVLIIGSGFAGLAAAIEATRKGAKDVHIFEKMSYFGGNSAINGGLFAAPDTPMQKQEGVKDSVDTMVADQLAAGRGIADEALLRHVAEHAVEALQMTLDAGSEYHPYLQQLGGHSVARTYQTTVSCGAGITQPLLQECRKLGVHTHNRAKFDGFILDEKGGVVGVKMREGYYFDKPESGKLVRIKARRGVIMATGGFAQNINMRMAQDPTLTAEVGCTNAPGATGEGMFEMFRLGAVPVHLAHIQSGPWASPDEGGFGYVSNYSIYNFPHSIAIDRLTGKRFMNEIADRKTRADAELNCRDAQGNPLPPILITSYEDSKQHPNTKKVLKYNVGWKFDSIDALAKHFDVPLAPLKKQIAEYNDYVKTQSDPQFGKNMTEAKGKFIQAPFTVVRLWPKVHYCQGGVQINTNAEVKDSLTGKPISGLYAAGEVCGGIHGVSRLGSCSIPECMVMGMTAARIMMQA</sequence>
<comment type="function">
    <text evidence="3">FAD-containing subunit of the ArdAB flavocytochrome c, which catalyzes the reduction of acrylate to propanoate and supports dimethylsulfoniopropionate-dependent anaerobic respiration (PubMed:38831506). In vitro, can use the artificial electron donor methyl viologen (PubMed:38831506). The natural electron donor is probably a low-potential cytochrome c (PubMed:38831506). Also shows weak activity toward methacrylate in vitro (at a 22-fold lower rate) but cannot use other tested 2-enoates, including crotonic, fumaric, sorbic, urocanic, cinnamic, p-coumaric, caffeic or ferulic acids (PubMed:38831506). The protein catalyzes a unidirectional reaction and cannot oxidize propanoate with phenazine metasulfate and dichlorophenolindophenol as electron acceptors (PubMed:38831506).</text>
</comment>
<comment type="cofactor">
    <cofactor evidence="3">
        <name>FAD</name>
        <dbReference type="ChEBI" id="CHEBI:57692"/>
    </cofactor>
</comment>
<comment type="activity regulation">
    <text evidence="3">Methacrylate acts as a competitive inhibitor of the acrylate reductase activity and suppresses the reductase activity in dose-dependent manner.</text>
</comment>
<comment type="biophysicochemical properties">
    <kinetics>
        <KM evidence="3">16 uM for acrylate (in the presence of reduced methyl viologen)</KM>
        <KM evidence="3">19 uM for methacrylate (in the presence of reduced methyl viologen)</KM>
        <Vmax evidence="3">58.0 umol/min/mg enzyme with acrylate as substrate (in the presence of reduced methyl viologen)</Vmax>
        <Vmax evidence="3">2.6 umol/min/mg enzyme with methacrylate as substrate (in the presence of reduced methyl viologen)</Vmax>
    </kinetics>
    <phDependence>
        <text evidence="3">Optimum pH is 7.5.</text>
    </phDependence>
</comment>
<comment type="subunit">
    <text evidence="3">The ArdAB flavocytochrome c is composed of a FAD-containing subunit (ArdA) and a heme c-containing subunit (ArdB).</text>
</comment>
<comment type="subcellular location">
    <subcellularLocation>
        <location evidence="3">Periplasm</location>
    </subcellularLocation>
</comment>
<comment type="induction">
    <text evidence="3">Part of the ard operon, which is induced under anaerobic conditions (PubMed:38831506). Expression is further induced by acrylate and methacrylate (PubMed:38831506). Not induced under aerobic conditions (PubMed:38831506).</text>
</comment>
<comment type="PTM">
    <text evidence="2">Predicted to be exported by the Tat system. The position of the signal peptide cleavage has not been experimentally proven.</text>
</comment>
<comment type="similarity">
    <text evidence="5">Belongs to the FAD-dependent oxidoreductase 2 family. FRD/SDH subfamily.</text>
</comment>
<name>ARDA_SHEWM</name>
<proteinExistence type="evidence at protein level"/>
<accession>B1KN79</accession>
<reference key="1">
    <citation type="submission" date="2008-02" db="EMBL/GenBank/DDBJ databases">
        <title>Complete sequence of Shewanella woodyi ATCC 51908.</title>
        <authorList>
            <consortium name="US DOE Joint Genome Institute"/>
            <person name="Copeland A."/>
            <person name="Lucas S."/>
            <person name="Lapidus A."/>
            <person name="Glavina del Rio T."/>
            <person name="Dalin E."/>
            <person name="Tice H."/>
            <person name="Bruce D."/>
            <person name="Goodwin L."/>
            <person name="Pitluck S."/>
            <person name="Sims D."/>
            <person name="Brettin T."/>
            <person name="Detter J.C."/>
            <person name="Han C."/>
            <person name="Kuske C.R."/>
            <person name="Schmutz J."/>
            <person name="Larimer F."/>
            <person name="Land M."/>
            <person name="Hauser L."/>
            <person name="Kyrpides N."/>
            <person name="Lykidis A."/>
            <person name="Zhao J.-S."/>
            <person name="Richardson P."/>
        </authorList>
    </citation>
    <scope>NUCLEOTIDE SEQUENCE [LARGE SCALE GENOMIC DNA]</scope>
    <source>
        <strain>ATCC 51908 / MS32</strain>
    </source>
</reference>
<reference key="2">
    <citation type="journal article" date="2024" name="Biochemistry (Mosc.)">
        <title>Acrylate Reductase of an Anaerobic Electron Transport Chain of the Marine Bacterium Shewanella woodyi.</title>
        <authorList>
            <person name="Bertsova Y.V."/>
            <person name="Serebryakova M.V."/>
            <person name="Bogachev V.A."/>
            <person name="Baykov A.A."/>
            <person name="Bogachev A.V."/>
        </authorList>
    </citation>
    <scope>FUNCTION AS AN ACRYLATE REDUCTASE</scope>
    <scope>COFACTOR</scope>
    <scope>ACTIVITY REGULATION</scope>
    <scope>BIOPHYSICOCHEMICAL PROPERTIES</scope>
    <scope>SUBUNIT</scope>
    <scope>SUBCELLULAR LOCATION</scope>
    <scope>INDUCTION</scope>
</reference>
<protein>
    <recommendedName>
        <fullName evidence="5">Acrylate reductase flavoprotein subunit</fullName>
        <ecNumber evidence="6">1.3.2.-</ecNumber>
    </recommendedName>
</protein>